<dbReference type="EC" id="2.1.1.174" evidence="1"/>
<dbReference type="EMBL" id="AL590842">
    <property type="protein sequence ID" value="CAL19268.1"/>
    <property type="molecule type" value="Genomic_DNA"/>
</dbReference>
<dbReference type="EMBL" id="AE009952">
    <property type="protein sequence ID" value="AAM87138.1"/>
    <property type="status" value="ALT_INIT"/>
    <property type="molecule type" value="Genomic_DNA"/>
</dbReference>
<dbReference type="EMBL" id="AE017042">
    <property type="protein sequence ID" value="AAS63090.1"/>
    <property type="status" value="ALT_INIT"/>
    <property type="molecule type" value="Genomic_DNA"/>
</dbReference>
<dbReference type="PIR" id="AB0073">
    <property type="entry name" value="AB0073"/>
</dbReference>
<dbReference type="RefSeq" id="WP_002210402.1">
    <property type="nucleotide sequence ID" value="NZ_WUCM01000076.1"/>
</dbReference>
<dbReference type="RefSeq" id="YP_002345660.1">
    <property type="nucleotide sequence ID" value="NC_003143.1"/>
</dbReference>
<dbReference type="SMR" id="Q0WJ78"/>
<dbReference type="IntAct" id="Q0WJ78">
    <property type="interactions" value="1"/>
</dbReference>
<dbReference type="STRING" id="214092.YPO0588"/>
<dbReference type="PaxDb" id="214092-YPO0588"/>
<dbReference type="DNASU" id="1148537"/>
<dbReference type="EnsemblBacteria" id="AAS63090">
    <property type="protein sequence ID" value="AAS63090"/>
    <property type="gene ID" value="YP_2908"/>
</dbReference>
<dbReference type="GeneID" id="57974028"/>
<dbReference type="KEGG" id="ype:YPO0588"/>
<dbReference type="KEGG" id="ypk:y3590"/>
<dbReference type="KEGG" id="ypm:YP_2908"/>
<dbReference type="PATRIC" id="fig|214092.21.peg.845"/>
<dbReference type="eggNOG" id="COG2813">
    <property type="taxonomic scope" value="Bacteria"/>
</dbReference>
<dbReference type="HOGENOM" id="CLU_040288_4_0_6"/>
<dbReference type="OMA" id="NRHLGYH"/>
<dbReference type="OrthoDB" id="29650at2"/>
<dbReference type="Proteomes" id="UP000000815">
    <property type="component" value="Chromosome"/>
</dbReference>
<dbReference type="Proteomes" id="UP000001019">
    <property type="component" value="Chromosome"/>
</dbReference>
<dbReference type="Proteomes" id="UP000002490">
    <property type="component" value="Chromosome"/>
</dbReference>
<dbReference type="GO" id="GO:0005737">
    <property type="term" value="C:cytoplasm"/>
    <property type="evidence" value="ECO:0007669"/>
    <property type="project" value="UniProtKB-SubCell"/>
</dbReference>
<dbReference type="GO" id="GO:0052916">
    <property type="term" value="F:23S rRNA (guanine(1835)-N(2))-methyltransferase activity"/>
    <property type="evidence" value="ECO:0007669"/>
    <property type="project" value="UniProtKB-EC"/>
</dbReference>
<dbReference type="GO" id="GO:0003676">
    <property type="term" value="F:nucleic acid binding"/>
    <property type="evidence" value="ECO:0007669"/>
    <property type="project" value="InterPro"/>
</dbReference>
<dbReference type="GO" id="GO:0008990">
    <property type="term" value="F:rRNA (guanine-N2-)-methyltransferase activity"/>
    <property type="evidence" value="ECO:0000318"/>
    <property type="project" value="GO_Central"/>
</dbReference>
<dbReference type="GO" id="GO:0070475">
    <property type="term" value="P:rRNA base methylation"/>
    <property type="evidence" value="ECO:0000318"/>
    <property type="project" value="GO_Central"/>
</dbReference>
<dbReference type="CDD" id="cd02440">
    <property type="entry name" value="AdoMet_MTases"/>
    <property type="match status" value="1"/>
</dbReference>
<dbReference type="Gene3D" id="3.40.50.150">
    <property type="entry name" value="Vaccinia Virus protein VP39"/>
    <property type="match status" value="2"/>
</dbReference>
<dbReference type="HAMAP" id="MF_01859">
    <property type="entry name" value="23SrRNA_methyltr_G"/>
    <property type="match status" value="1"/>
</dbReference>
<dbReference type="InterPro" id="IPR002052">
    <property type="entry name" value="DNA_methylase_N6_adenine_CS"/>
</dbReference>
<dbReference type="InterPro" id="IPR017237">
    <property type="entry name" value="rRNA_m2G-MeTrfase_RlmG"/>
</dbReference>
<dbReference type="InterPro" id="IPR046977">
    <property type="entry name" value="RsmC/RlmG"/>
</dbReference>
<dbReference type="InterPro" id="IPR029063">
    <property type="entry name" value="SAM-dependent_MTases_sf"/>
</dbReference>
<dbReference type="InterPro" id="IPR007848">
    <property type="entry name" value="Small_mtfrase_dom"/>
</dbReference>
<dbReference type="NCBIfam" id="NF011577">
    <property type="entry name" value="PRK15001.1"/>
    <property type="match status" value="1"/>
</dbReference>
<dbReference type="PANTHER" id="PTHR47816:SF5">
    <property type="entry name" value="RIBOSOMAL RNA LARGE SUBUNIT METHYLTRANSFERASE G"/>
    <property type="match status" value="1"/>
</dbReference>
<dbReference type="PANTHER" id="PTHR47816">
    <property type="entry name" value="RIBOSOMAL RNA SMALL SUBUNIT METHYLTRANSFERASE C"/>
    <property type="match status" value="1"/>
</dbReference>
<dbReference type="Pfam" id="PF05175">
    <property type="entry name" value="MTS"/>
    <property type="match status" value="1"/>
</dbReference>
<dbReference type="PIRSF" id="PIRSF037565">
    <property type="entry name" value="RRNA_m2G_Mtase_RsmD_prd"/>
    <property type="match status" value="1"/>
</dbReference>
<dbReference type="SUPFAM" id="SSF53335">
    <property type="entry name" value="S-adenosyl-L-methionine-dependent methyltransferases"/>
    <property type="match status" value="1"/>
</dbReference>
<reference key="1">
    <citation type="journal article" date="2001" name="Nature">
        <title>Genome sequence of Yersinia pestis, the causative agent of plague.</title>
        <authorList>
            <person name="Parkhill J."/>
            <person name="Wren B.W."/>
            <person name="Thomson N.R."/>
            <person name="Titball R.W."/>
            <person name="Holden M.T.G."/>
            <person name="Prentice M.B."/>
            <person name="Sebaihia M."/>
            <person name="James K.D."/>
            <person name="Churcher C.M."/>
            <person name="Mungall K.L."/>
            <person name="Baker S."/>
            <person name="Basham D."/>
            <person name="Bentley S.D."/>
            <person name="Brooks K."/>
            <person name="Cerdeno-Tarraga A.-M."/>
            <person name="Chillingworth T."/>
            <person name="Cronin A."/>
            <person name="Davies R.M."/>
            <person name="Davis P."/>
            <person name="Dougan G."/>
            <person name="Feltwell T."/>
            <person name="Hamlin N."/>
            <person name="Holroyd S."/>
            <person name="Jagels K."/>
            <person name="Karlyshev A.V."/>
            <person name="Leather S."/>
            <person name="Moule S."/>
            <person name="Oyston P.C.F."/>
            <person name="Quail M.A."/>
            <person name="Rutherford K.M."/>
            <person name="Simmonds M."/>
            <person name="Skelton J."/>
            <person name="Stevens K."/>
            <person name="Whitehead S."/>
            <person name="Barrell B.G."/>
        </authorList>
    </citation>
    <scope>NUCLEOTIDE SEQUENCE [LARGE SCALE GENOMIC DNA]</scope>
    <source>
        <strain>CO-92 / Biovar Orientalis</strain>
    </source>
</reference>
<reference key="2">
    <citation type="journal article" date="2002" name="J. Bacteriol.">
        <title>Genome sequence of Yersinia pestis KIM.</title>
        <authorList>
            <person name="Deng W."/>
            <person name="Burland V."/>
            <person name="Plunkett G. III"/>
            <person name="Boutin A."/>
            <person name="Mayhew G.F."/>
            <person name="Liss P."/>
            <person name="Perna N.T."/>
            <person name="Rose D.J."/>
            <person name="Mau B."/>
            <person name="Zhou S."/>
            <person name="Schwartz D.C."/>
            <person name="Fetherston J.D."/>
            <person name="Lindler L.E."/>
            <person name="Brubaker R.R."/>
            <person name="Plano G.V."/>
            <person name="Straley S.C."/>
            <person name="McDonough K.A."/>
            <person name="Nilles M.L."/>
            <person name="Matson J.S."/>
            <person name="Blattner F.R."/>
            <person name="Perry R.D."/>
        </authorList>
    </citation>
    <scope>NUCLEOTIDE SEQUENCE [LARGE SCALE GENOMIC DNA]</scope>
    <source>
        <strain>KIM10+ / Biovar Mediaevalis</strain>
    </source>
</reference>
<reference key="3">
    <citation type="journal article" date="2004" name="DNA Res.">
        <title>Complete genome sequence of Yersinia pestis strain 91001, an isolate avirulent to humans.</title>
        <authorList>
            <person name="Song Y."/>
            <person name="Tong Z."/>
            <person name="Wang J."/>
            <person name="Wang L."/>
            <person name="Guo Z."/>
            <person name="Han Y."/>
            <person name="Zhang J."/>
            <person name="Pei D."/>
            <person name="Zhou D."/>
            <person name="Qin H."/>
            <person name="Pang X."/>
            <person name="Han Y."/>
            <person name="Zhai J."/>
            <person name="Li M."/>
            <person name="Cui B."/>
            <person name="Qi Z."/>
            <person name="Jin L."/>
            <person name="Dai R."/>
            <person name="Chen F."/>
            <person name="Li S."/>
            <person name="Ye C."/>
            <person name="Du Z."/>
            <person name="Lin W."/>
            <person name="Wang J."/>
            <person name="Yu J."/>
            <person name="Yang H."/>
            <person name="Wang J."/>
            <person name="Huang P."/>
            <person name="Yang R."/>
        </authorList>
    </citation>
    <scope>NUCLEOTIDE SEQUENCE [LARGE SCALE GENOMIC DNA]</scope>
    <source>
        <strain>91001 / Biovar Mediaevalis</strain>
    </source>
</reference>
<name>RLMG_YERPE</name>
<evidence type="ECO:0000255" key="1">
    <source>
        <dbReference type="HAMAP-Rule" id="MF_01859"/>
    </source>
</evidence>
<evidence type="ECO:0000305" key="2"/>
<organism>
    <name type="scientific">Yersinia pestis</name>
    <dbReference type="NCBI Taxonomy" id="632"/>
    <lineage>
        <taxon>Bacteria</taxon>
        <taxon>Pseudomonadati</taxon>
        <taxon>Pseudomonadota</taxon>
        <taxon>Gammaproteobacteria</taxon>
        <taxon>Enterobacterales</taxon>
        <taxon>Yersiniaceae</taxon>
        <taxon>Yersinia</taxon>
    </lineage>
</organism>
<keyword id="KW-0963">Cytoplasm</keyword>
<keyword id="KW-0489">Methyltransferase</keyword>
<keyword id="KW-1185">Reference proteome</keyword>
<keyword id="KW-0698">rRNA processing</keyword>
<keyword id="KW-0949">S-adenosyl-L-methionine</keyword>
<keyword id="KW-0808">Transferase</keyword>
<proteinExistence type="inferred from homology"/>
<comment type="function">
    <text evidence="1">Specifically methylates the guanine in position 1835 (m2G1835) of 23S rRNA.</text>
</comment>
<comment type="catalytic activity">
    <reaction evidence="1">
        <text>guanosine(1835) in 23S rRNA + S-adenosyl-L-methionine = N(2)-methylguanosine(1835) in 23S rRNA + S-adenosyl-L-homocysteine + H(+)</text>
        <dbReference type="Rhea" id="RHEA:42744"/>
        <dbReference type="Rhea" id="RHEA-COMP:10217"/>
        <dbReference type="Rhea" id="RHEA-COMP:10218"/>
        <dbReference type="ChEBI" id="CHEBI:15378"/>
        <dbReference type="ChEBI" id="CHEBI:57856"/>
        <dbReference type="ChEBI" id="CHEBI:59789"/>
        <dbReference type="ChEBI" id="CHEBI:74269"/>
        <dbReference type="ChEBI" id="CHEBI:74481"/>
        <dbReference type="EC" id="2.1.1.174"/>
    </reaction>
</comment>
<comment type="subcellular location">
    <subcellularLocation>
        <location evidence="1">Cytoplasm</location>
    </subcellularLocation>
</comment>
<comment type="similarity">
    <text evidence="1">Belongs to the methyltransferase superfamily. RlmG family.</text>
</comment>
<comment type="sequence caution" evidence="2">
    <conflict type="erroneous initiation">
        <sequence resource="EMBL-CDS" id="AAM87138"/>
    </conflict>
</comment>
<comment type="sequence caution" evidence="2">
    <conflict type="erroneous initiation">
        <sequence resource="EMBL-CDS" id="AAS63090"/>
    </conflict>
</comment>
<sequence length="395" mass="43841">MSQLDLGTQSLELERFPPQENSNTLQAWEAADEYLLQNIDLSQIDGRPVLVFNDQFGTLACALHAYRPFSSSDSYMSQLATAHNLRLNHLDESAVTLLSSVDDLPEAPKLVVIKIPKALALLEHQLRALRRVVAPDTVIIAGAKSRDVHNSTLQLFEKILGPTKTTLAWKKARLIHCEVADIPLADAPETIDWPLPNTDYIIHNHANVFSRNNLDIGARFFMEILPYDVTGKIADLGCGNGVVGLIALEQNPLAEMLFVDESYMAVASSELNITVNRPQDLSRCEFMVSHGLAGVERESLQLVLCNPPFHQQHAVSDHVAWQMFCDAKRCLKAGGELMIVGNRHLDYFHKLKRLFGNCETLDSNQKFMVLKSVKQASSRSEGGGSGSLDMSYSDF</sequence>
<accession>Q0WJ78</accession>
<accession>Q74RV8</accession>
<accession>Q8CZR3</accession>
<feature type="chain" id="PRO_0000366539" description="Ribosomal RNA large subunit methyltransferase G">
    <location>
        <begin position="1"/>
        <end position="395"/>
    </location>
</feature>
<gene>
    <name evidence="1" type="primary">rlmG</name>
    <name type="ordered locus">YPO0588</name>
    <name type="ordered locus">y3590</name>
    <name type="ordered locus">YP_2908</name>
</gene>
<protein>
    <recommendedName>
        <fullName evidence="1">Ribosomal RNA large subunit methyltransferase G</fullName>
        <ecNumber evidence="1">2.1.1.174</ecNumber>
    </recommendedName>
    <alternativeName>
        <fullName evidence="1">23S rRNA m2G1835 methyltransferase</fullName>
    </alternativeName>
    <alternativeName>
        <fullName evidence="1">rRNA (guanine-N(2)-)-methyltransferase RlmG</fullName>
    </alternativeName>
</protein>